<dbReference type="EMBL" id="CP000386">
    <property type="protein sequence ID" value="ABG03818.1"/>
    <property type="molecule type" value="Genomic_DNA"/>
</dbReference>
<dbReference type="RefSeq" id="WP_011563836.1">
    <property type="nucleotide sequence ID" value="NC_008148.1"/>
</dbReference>
<dbReference type="SMR" id="Q1AXR0"/>
<dbReference type="STRING" id="266117.Rxyl_0851"/>
<dbReference type="KEGG" id="rxy:Rxyl_0851"/>
<dbReference type="eggNOG" id="COG0359">
    <property type="taxonomic scope" value="Bacteria"/>
</dbReference>
<dbReference type="HOGENOM" id="CLU_078938_3_0_11"/>
<dbReference type="OrthoDB" id="9788336at2"/>
<dbReference type="PhylomeDB" id="Q1AXR0"/>
<dbReference type="Proteomes" id="UP000006637">
    <property type="component" value="Chromosome"/>
</dbReference>
<dbReference type="GO" id="GO:1990904">
    <property type="term" value="C:ribonucleoprotein complex"/>
    <property type="evidence" value="ECO:0007669"/>
    <property type="project" value="UniProtKB-KW"/>
</dbReference>
<dbReference type="GO" id="GO:0005840">
    <property type="term" value="C:ribosome"/>
    <property type="evidence" value="ECO:0007669"/>
    <property type="project" value="UniProtKB-KW"/>
</dbReference>
<dbReference type="GO" id="GO:0019843">
    <property type="term" value="F:rRNA binding"/>
    <property type="evidence" value="ECO:0007669"/>
    <property type="project" value="UniProtKB-UniRule"/>
</dbReference>
<dbReference type="GO" id="GO:0003735">
    <property type="term" value="F:structural constituent of ribosome"/>
    <property type="evidence" value="ECO:0007669"/>
    <property type="project" value="InterPro"/>
</dbReference>
<dbReference type="GO" id="GO:0006412">
    <property type="term" value="P:translation"/>
    <property type="evidence" value="ECO:0007669"/>
    <property type="project" value="UniProtKB-UniRule"/>
</dbReference>
<dbReference type="Gene3D" id="3.10.430.100">
    <property type="entry name" value="Ribosomal protein L9, C-terminal domain"/>
    <property type="match status" value="1"/>
</dbReference>
<dbReference type="Gene3D" id="3.40.5.10">
    <property type="entry name" value="Ribosomal protein L9, N-terminal domain"/>
    <property type="match status" value="1"/>
</dbReference>
<dbReference type="HAMAP" id="MF_00503">
    <property type="entry name" value="Ribosomal_bL9"/>
    <property type="match status" value="1"/>
</dbReference>
<dbReference type="InterPro" id="IPR000244">
    <property type="entry name" value="Ribosomal_bL9"/>
</dbReference>
<dbReference type="InterPro" id="IPR009027">
    <property type="entry name" value="Ribosomal_bL9/RNase_H1_N"/>
</dbReference>
<dbReference type="InterPro" id="IPR020594">
    <property type="entry name" value="Ribosomal_bL9_bac/chp"/>
</dbReference>
<dbReference type="InterPro" id="IPR020069">
    <property type="entry name" value="Ribosomal_bL9_C"/>
</dbReference>
<dbReference type="InterPro" id="IPR036791">
    <property type="entry name" value="Ribosomal_bL9_C_sf"/>
</dbReference>
<dbReference type="InterPro" id="IPR020070">
    <property type="entry name" value="Ribosomal_bL9_N"/>
</dbReference>
<dbReference type="InterPro" id="IPR036935">
    <property type="entry name" value="Ribosomal_bL9_N_sf"/>
</dbReference>
<dbReference type="NCBIfam" id="TIGR00158">
    <property type="entry name" value="L9"/>
    <property type="match status" value="1"/>
</dbReference>
<dbReference type="PANTHER" id="PTHR21368">
    <property type="entry name" value="50S RIBOSOMAL PROTEIN L9"/>
    <property type="match status" value="1"/>
</dbReference>
<dbReference type="Pfam" id="PF03948">
    <property type="entry name" value="Ribosomal_L9_C"/>
    <property type="match status" value="1"/>
</dbReference>
<dbReference type="Pfam" id="PF01281">
    <property type="entry name" value="Ribosomal_L9_N"/>
    <property type="match status" value="1"/>
</dbReference>
<dbReference type="SUPFAM" id="SSF55658">
    <property type="entry name" value="L9 N-domain-like"/>
    <property type="match status" value="1"/>
</dbReference>
<dbReference type="SUPFAM" id="SSF55653">
    <property type="entry name" value="Ribosomal protein L9 C-domain"/>
    <property type="match status" value="1"/>
</dbReference>
<dbReference type="PROSITE" id="PS00651">
    <property type="entry name" value="RIBOSOMAL_L9"/>
    <property type="match status" value="1"/>
</dbReference>
<feature type="chain" id="PRO_0000258487" description="Large ribosomal subunit protein bL9">
    <location>
        <begin position="1"/>
        <end position="149"/>
    </location>
</feature>
<accession>Q1AXR0</accession>
<sequence length="149" mass="16739">MQVILTQDVEKVGRRGDIVDVSRGYVRNYLVPRGLAEVATPAKLEEARRRMEEAAERERRLAERAEEIAETLNKSVITIEARTGEDERLFGSVTAANIAEAIEKARGIHLDRRKIRLEEPIRSLGTHQVPVQVHGEIEASVKVIVVPKL</sequence>
<proteinExistence type="inferred from homology"/>
<reference key="1">
    <citation type="submission" date="2006-06" db="EMBL/GenBank/DDBJ databases">
        <title>Complete sequence of Rubrobacter xylanophilus DSM 9941.</title>
        <authorList>
            <consortium name="US DOE Joint Genome Institute"/>
            <person name="Copeland A."/>
            <person name="Lucas S."/>
            <person name="Lapidus A."/>
            <person name="Barry K."/>
            <person name="Detter J.C."/>
            <person name="Glavina del Rio T."/>
            <person name="Hammon N."/>
            <person name="Israni S."/>
            <person name="Dalin E."/>
            <person name="Tice H."/>
            <person name="Pitluck S."/>
            <person name="Munk A.C."/>
            <person name="Brettin T."/>
            <person name="Bruce D."/>
            <person name="Han C."/>
            <person name="Tapia R."/>
            <person name="Gilna P."/>
            <person name="Schmutz J."/>
            <person name="Larimer F."/>
            <person name="Land M."/>
            <person name="Hauser L."/>
            <person name="Kyrpides N."/>
            <person name="Lykidis A."/>
            <person name="da Costa M.S."/>
            <person name="Rainey F.A."/>
            <person name="Empadinhas N."/>
            <person name="Jolivet E."/>
            <person name="Battista J.R."/>
            <person name="Richardson P."/>
        </authorList>
    </citation>
    <scope>NUCLEOTIDE SEQUENCE [LARGE SCALE GENOMIC DNA]</scope>
    <source>
        <strain>DSM 9941 / JCM 11954 / NBRC 16129 / PRD-1</strain>
    </source>
</reference>
<protein>
    <recommendedName>
        <fullName evidence="1">Large ribosomal subunit protein bL9</fullName>
    </recommendedName>
    <alternativeName>
        <fullName evidence="2">50S ribosomal protein L9</fullName>
    </alternativeName>
</protein>
<name>RL9_RUBXD</name>
<gene>
    <name evidence="1" type="primary">rplI</name>
    <name type="ordered locus">Rxyl_0851</name>
</gene>
<organism>
    <name type="scientific">Rubrobacter xylanophilus (strain DSM 9941 / JCM 11954 / NBRC 16129 / PRD-1)</name>
    <dbReference type="NCBI Taxonomy" id="266117"/>
    <lineage>
        <taxon>Bacteria</taxon>
        <taxon>Bacillati</taxon>
        <taxon>Actinomycetota</taxon>
        <taxon>Rubrobacteria</taxon>
        <taxon>Rubrobacterales</taxon>
        <taxon>Rubrobacteraceae</taxon>
        <taxon>Rubrobacter</taxon>
    </lineage>
</organism>
<keyword id="KW-1185">Reference proteome</keyword>
<keyword id="KW-0687">Ribonucleoprotein</keyword>
<keyword id="KW-0689">Ribosomal protein</keyword>
<keyword id="KW-0694">RNA-binding</keyword>
<keyword id="KW-0699">rRNA-binding</keyword>
<comment type="function">
    <text evidence="1">Binds to the 23S rRNA.</text>
</comment>
<comment type="similarity">
    <text evidence="1">Belongs to the bacterial ribosomal protein bL9 family.</text>
</comment>
<evidence type="ECO:0000255" key="1">
    <source>
        <dbReference type="HAMAP-Rule" id="MF_00503"/>
    </source>
</evidence>
<evidence type="ECO:0000305" key="2"/>